<comment type="function">
    <text evidence="1">Peptidoglycan polymerase that catalyzes glycan chain elongation from lipid-linked precursors.</text>
</comment>
<comment type="catalytic activity">
    <reaction evidence="1">
        <text>[GlcNAc-(1-&gt;4)-Mur2Ac(oyl-L-Ala-gamma-D-Glu-L-Lys-D-Ala-D-Ala)](n)-di-trans,octa-cis-undecaprenyl diphosphate + beta-D-GlcNAc-(1-&gt;4)-Mur2Ac(oyl-L-Ala-gamma-D-Glu-L-Lys-D-Ala-D-Ala)-di-trans,octa-cis-undecaprenyl diphosphate = [GlcNAc-(1-&gt;4)-Mur2Ac(oyl-L-Ala-gamma-D-Glu-L-Lys-D-Ala-D-Ala)](n+1)-di-trans,octa-cis-undecaprenyl diphosphate + di-trans,octa-cis-undecaprenyl diphosphate + H(+)</text>
        <dbReference type="Rhea" id="RHEA:23708"/>
        <dbReference type="Rhea" id="RHEA-COMP:9602"/>
        <dbReference type="Rhea" id="RHEA-COMP:9603"/>
        <dbReference type="ChEBI" id="CHEBI:15378"/>
        <dbReference type="ChEBI" id="CHEBI:58405"/>
        <dbReference type="ChEBI" id="CHEBI:60033"/>
        <dbReference type="ChEBI" id="CHEBI:78435"/>
        <dbReference type="EC" id="2.4.99.28"/>
    </reaction>
</comment>
<comment type="pathway">
    <text evidence="1">Cell wall biogenesis; peptidoglycan biosynthesis.</text>
</comment>
<comment type="subcellular location">
    <subcellularLocation>
        <location evidence="1">Cell inner membrane</location>
        <topology evidence="1">Single-pass membrane protein</topology>
    </subcellularLocation>
</comment>
<comment type="similarity">
    <text evidence="1">Belongs to the glycosyltransferase 51 family.</text>
</comment>
<proteinExistence type="inferred from homology"/>
<accession>Q82U73</accession>
<dbReference type="EC" id="2.4.99.28" evidence="1"/>
<dbReference type="EMBL" id="AL954747">
    <property type="protein sequence ID" value="CAD85539.1"/>
    <property type="molecule type" value="Genomic_DNA"/>
</dbReference>
<dbReference type="SMR" id="Q82U73"/>
<dbReference type="STRING" id="228410.NE1628"/>
<dbReference type="CAZy" id="GT51">
    <property type="family name" value="Glycosyltransferase Family 51"/>
</dbReference>
<dbReference type="KEGG" id="neu:NE1628"/>
<dbReference type="eggNOG" id="COG0744">
    <property type="taxonomic scope" value="Bacteria"/>
</dbReference>
<dbReference type="HOGENOM" id="CLU_006354_1_0_4"/>
<dbReference type="OrthoDB" id="9766909at2"/>
<dbReference type="PhylomeDB" id="Q82U73"/>
<dbReference type="UniPathway" id="UPA00219"/>
<dbReference type="Proteomes" id="UP000001416">
    <property type="component" value="Chromosome"/>
</dbReference>
<dbReference type="GO" id="GO:0009274">
    <property type="term" value="C:peptidoglycan-based cell wall"/>
    <property type="evidence" value="ECO:0007669"/>
    <property type="project" value="InterPro"/>
</dbReference>
<dbReference type="GO" id="GO:0005886">
    <property type="term" value="C:plasma membrane"/>
    <property type="evidence" value="ECO:0007669"/>
    <property type="project" value="UniProtKB-SubCell"/>
</dbReference>
<dbReference type="GO" id="GO:0016763">
    <property type="term" value="F:pentosyltransferase activity"/>
    <property type="evidence" value="ECO:0007669"/>
    <property type="project" value="InterPro"/>
</dbReference>
<dbReference type="GO" id="GO:0008955">
    <property type="term" value="F:peptidoglycan glycosyltransferase activity"/>
    <property type="evidence" value="ECO:0007669"/>
    <property type="project" value="UniProtKB-UniRule"/>
</dbReference>
<dbReference type="GO" id="GO:0071555">
    <property type="term" value="P:cell wall organization"/>
    <property type="evidence" value="ECO:0007669"/>
    <property type="project" value="UniProtKB-KW"/>
</dbReference>
<dbReference type="GO" id="GO:0009252">
    <property type="term" value="P:peptidoglycan biosynthetic process"/>
    <property type="evidence" value="ECO:0007669"/>
    <property type="project" value="UniProtKB-UniRule"/>
</dbReference>
<dbReference type="GO" id="GO:0008360">
    <property type="term" value="P:regulation of cell shape"/>
    <property type="evidence" value="ECO:0007669"/>
    <property type="project" value="UniProtKB-KW"/>
</dbReference>
<dbReference type="Gene3D" id="1.10.3810.10">
    <property type="entry name" value="Biosynthetic peptidoglycan transglycosylase-like"/>
    <property type="match status" value="1"/>
</dbReference>
<dbReference type="HAMAP" id="MF_00766">
    <property type="entry name" value="PGT_MtgA"/>
    <property type="match status" value="1"/>
</dbReference>
<dbReference type="InterPro" id="IPR001264">
    <property type="entry name" value="Glyco_trans_51"/>
</dbReference>
<dbReference type="InterPro" id="IPR023346">
    <property type="entry name" value="Lysozyme-like_dom_sf"/>
</dbReference>
<dbReference type="InterPro" id="IPR036950">
    <property type="entry name" value="PBP_transglycosylase"/>
</dbReference>
<dbReference type="InterPro" id="IPR011812">
    <property type="entry name" value="Pep_trsgly"/>
</dbReference>
<dbReference type="NCBIfam" id="TIGR02070">
    <property type="entry name" value="mono_pep_trsgly"/>
    <property type="match status" value="1"/>
</dbReference>
<dbReference type="PANTHER" id="PTHR30400:SF0">
    <property type="entry name" value="BIOSYNTHETIC PEPTIDOGLYCAN TRANSGLYCOSYLASE"/>
    <property type="match status" value="1"/>
</dbReference>
<dbReference type="PANTHER" id="PTHR30400">
    <property type="entry name" value="MONOFUNCTIONAL BIOSYNTHETIC PEPTIDOGLYCAN TRANSGLYCOSYLASE"/>
    <property type="match status" value="1"/>
</dbReference>
<dbReference type="Pfam" id="PF00912">
    <property type="entry name" value="Transgly"/>
    <property type="match status" value="1"/>
</dbReference>
<dbReference type="SUPFAM" id="SSF53955">
    <property type="entry name" value="Lysozyme-like"/>
    <property type="match status" value="1"/>
</dbReference>
<sequence>MKLAQARRPATSKPRLISTWLLRPLLLLLTAALLYQSWFLLHIVYWRSYSPTTSAFMQDRLKIMRQQNPAASLQHQWVDYEQISSHLKRAVIAAEDARFLQHQGFDYKAIETAWKKNLKQRKWAAGGSTISQQLAKNLFLSTEKTVWRKSRETLITLMLEEFLTKRRILEIYLNIIEWGDGIFGIEAAARHYFGISAASLTPAQAAWLASIIPNPRFYDTRRTLPKLLNKSRIILSRLPAAKIP</sequence>
<reference key="1">
    <citation type="journal article" date="2003" name="J. Bacteriol.">
        <title>Complete genome sequence of the ammonia-oxidizing bacterium and obligate chemolithoautotroph Nitrosomonas europaea.</title>
        <authorList>
            <person name="Chain P."/>
            <person name="Lamerdin J.E."/>
            <person name="Larimer F.W."/>
            <person name="Regala W."/>
            <person name="Lao V."/>
            <person name="Land M.L."/>
            <person name="Hauser L."/>
            <person name="Hooper A.B."/>
            <person name="Klotz M.G."/>
            <person name="Norton J."/>
            <person name="Sayavedra-Soto L.A."/>
            <person name="Arciero D.M."/>
            <person name="Hommes N.G."/>
            <person name="Whittaker M.M."/>
            <person name="Arp D.J."/>
        </authorList>
    </citation>
    <scope>NUCLEOTIDE SEQUENCE [LARGE SCALE GENOMIC DNA]</scope>
    <source>
        <strain>ATCC 19718 / CIP 103999 / KCTC 2705 / NBRC 14298</strain>
    </source>
</reference>
<organism>
    <name type="scientific">Nitrosomonas europaea (strain ATCC 19718 / CIP 103999 / KCTC 2705 / NBRC 14298)</name>
    <dbReference type="NCBI Taxonomy" id="228410"/>
    <lineage>
        <taxon>Bacteria</taxon>
        <taxon>Pseudomonadati</taxon>
        <taxon>Pseudomonadota</taxon>
        <taxon>Betaproteobacteria</taxon>
        <taxon>Nitrosomonadales</taxon>
        <taxon>Nitrosomonadaceae</taxon>
        <taxon>Nitrosomonas</taxon>
    </lineage>
</organism>
<protein>
    <recommendedName>
        <fullName evidence="1">Biosynthetic peptidoglycan transglycosylase</fullName>
        <ecNumber evidence="1">2.4.99.28</ecNumber>
    </recommendedName>
    <alternativeName>
        <fullName evidence="1">Glycan polymerase</fullName>
    </alternativeName>
    <alternativeName>
        <fullName evidence="1">Peptidoglycan glycosyltransferase MtgA</fullName>
        <shortName evidence="1">PGT</shortName>
    </alternativeName>
</protein>
<name>MTGA_NITEU</name>
<feature type="chain" id="PRO_0000083134" description="Biosynthetic peptidoglycan transglycosylase">
    <location>
        <begin position="1"/>
        <end position="244"/>
    </location>
</feature>
<feature type="transmembrane region" description="Helical" evidence="1">
    <location>
        <begin position="25"/>
        <end position="45"/>
    </location>
</feature>
<keyword id="KW-0997">Cell inner membrane</keyword>
<keyword id="KW-1003">Cell membrane</keyword>
<keyword id="KW-0133">Cell shape</keyword>
<keyword id="KW-0961">Cell wall biogenesis/degradation</keyword>
<keyword id="KW-0328">Glycosyltransferase</keyword>
<keyword id="KW-0472">Membrane</keyword>
<keyword id="KW-0573">Peptidoglycan synthesis</keyword>
<keyword id="KW-1185">Reference proteome</keyword>
<keyword id="KW-0808">Transferase</keyword>
<keyword id="KW-0812">Transmembrane</keyword>
<keyword id="KW-1133">Transmembrane helix</keyword>
<evidence type="ECO:0000255" key="1">
    <source>
        <dbReference type="HAMAP-Rule" id="MF_00766"/>
    </source>
</evidence>
<gene>
    <name evidence="1" type="primary">mtgA</name>
    <name type="ordered locus">NE1628</name>
</gene>